<keyword id="KW-0963">Cytoplasm</keyword>
<keyword id="KW-0227">DNA damage</keyword>
<keyword id="KW-0233">DNA recombination</keyword>
<keyword id="KW-0234">DNA repair</keyword>
<keyword id="KW-0238">DNA-binding</keyword>
<keyword id="KW-1185">Reference proteome</keyword>
<accession>B1XL12</accession>
<proteinExistence type="inferred from homology"/>
<name>RUVA_PICP2</name>
<dbReference type="EMBL" id="CP000951">
    <property type="protein sequence ID" value="ACA99267.1"/>
    <property type="molecule type" value="Genomic_DNA"/>
</dbReference>
<dbReference type="RefSeq" id="WP_012306890.1">
    <property type="nucleotide sequence ID" value="NZ_JAHHPU010000001.1"/>
</dbReference>
<dbReference type="SMR" id="B1XL12"/>
<dbReference type="STRING" id="32049.SYNPCC7002_A1270"/>
<dbReference type="KEGG" id="syp:SYNPCC7002_A1270"/>
<dbReference type="eggNOG" id="COG0632">
    <property type="taxonomic scope" value="Bacteria"/>
</dbReference>
<dbReference type="HOGENOM" id="CLU_087936_0_0_3"/>
<dbReference type="Proteomes" id="UP000001688">
    <property type="component" value="Chromosome"/>
</dbReference>
<dbReference type="GO" id="GO:0005737">
    <property type="term" value="C:cytoplasm"/>
    <property type="evidence" value="ECO:0007669"/>
    <property type="project" value="UniProtKB-SubCell"/>
</dbReference>
<dbReference type="GO" id="GO:0009379">
    <property type="term" value="C:Holliday junction helicase complex"/>
    <property type="evidence" value="ECO:0007669"/>
    <property type="project" value="InterPro"/>
</dbReference>
<dbReference type="GO" id="GO:0048476">
    <property type="term" value="C:Holliday junction resolvase complex"/>
    <property type="evidence" value="ECO:0007669"/>
    <property type="project" value="UniProtKB-UniRule"/>
</dbReference>
<dbReference type="GO" id="GO:0005524">
    <property type="term" value="F:ATP binding"/>
    <property type="evidence" value="ECO:0007669"/>
    <property type="project" value="InterPro"/>
</dbReference>
<dbReference type="GO" id="GO:0000400">
    <property type="term" value="F:four-way junction DNA binding"/>
    <property type="evidence" value="ECO:0007669"/>
    <property type="project" value="UniProtKB-UniRule"/>
</dbReference>
<dbReference type="GO" id="GO:0009378">
    <property type="term" value="F:four-way junction helicase activity"/>
    <property type="evidence" value="ECO:0007669"/>
    <property type="project" value="InterPro"/>
</dbReference>
<dbReference type="GO" id="GO:0006310">
    <property type="term" value="P:DNA recombination"/>
    <property type="evidence" value="ECO:0007669"/>
    <property type="project" value="UniProtKB-UniRule"/>
</dbReference>
<dbReference type="GO" id="GO:0006281">
    <property type="term" value="P:DNA repair"/>
    <property type="evidence" value="ECO:0007669"/>
    <property type="project" value="UniProtKB-UniRule"/>
</dbReference>
<dbReference type="CDD" id="cd14332">
    <property type="entry name" value="UBA_RuvA_C"/>
    <property type="match status" value="1"/>
</dbReference>
<dbReference type="Gene3D" id="1.10.150.20">
    <property type="entry name" value="5' to 3' exonuclease, C-terminal subdomain"/>
    <property type="match status" value="1"/>
</dbReference>
<dbReference type="Gene3D" id="2.40.50.140">
    <property type="entry name" value="Nucleic acid-binding proteins"/>
    <property type="match status" value="1"/>
</dbReference>
<dbReference type="HAMAP" id="MF_00031">
    <property type="entry name" value="DNA_HJ_migration_RuvA"/>
    <property type="match status" value="1"/>
</dbReference>
<dbReference type="InterPro" id="IPR013849">
    <property type="entry name" value="DNA_helicase_Holl-junc_RuvA_I"/>
</dbReference>
<dbReference type="InterPro" id="IPR003583">
    <property type="entry name" value="Hlx-hairpin-Hlx_DNA-bd_motif"/>
</dbReference>
<dbReference type="InterPro" id="IPR012340">
    <property type="entry name" value="NA-bd_OB-fold"/>
</dbReference>
<dbReference type="InterPro" id="IPR000085">
    <property type="entry name" value="RuvA"/>
</dbReference>
<dbReference type="InterPro" id="IPR010994">
    <property type="entry name" value="RuvA_2-like"/>
</dbReference>
<dbReference type="InterPro" id="IPR011114">
    <property type="entry name" value="RuvA_C"/>
</dbReference>
<dbReference type="NCBIfam" id="TIGR00084">
    <property type="entry name" value="ruvA"/>
    <property type="match status" value="1"/>
</dbReference>
<dbReference type="Pfam" id="PF14520">
    <property type="entry name" value="HHH_5"/>
    <property type="match status" value="1"/>
</dbReference>
<dbReference type="Pfam" id="PF07499">
    <property type="entry name" value="RuvA_C"/>
    <property type="match status" value="1"/>
</dbReference>
<dbReference type="Pfam" id="PF01330">
    <property type="entry name" value="RuvA_N"/>
    <property type="match status" value="1"/>
</dbReference>
<dbReference type="SMART" id="SM00278">
    <property type="entry name" value="HhH1"/>
    <property type="match status" value="2"/>
</dbReference>
<dbReference type="SUPFAM" id="SSF50249">
    <property type="entry name" value="Nucleic acid-binding proteins"/>
    <property type="match status" value="1"/>
</dbReference>
<dbReference type="SUPFAM" id="SSF47781">
    <property type="entry name" value="RuvA domain 2-like"/>
    <property type="match status" value="1"/>
</dbReference>
<comment type="function">
    <text evidence="1">The RuvA-RuvB-RuvC complex processes Holliday junction (HJ) DNA during genetic recombination and DNA repair, while the RuvA-RuvB complex plays an important role in the rescue of blocked DNA replication forks via replication fork reversal (RFR). RuvA specifically binds to HJ cruciform DNA, conferring on it an open structure. The RuvB hexamer acts as an ATP-dependent pump, pulling dsDNA into and through the RuvAB complex. HJ branch migration allows RuvC to scan DNA until it finds its consensus sequence, where it cleaves and resolves the cruciform DNA.</text>
</comment>
<comment type="subunit">
    <text evidence="1">Homotetramer. Forms an RuvA(8)-RuvB(12)-Holliday junction (HJ) complex. HJ DNA is sandwiched between 2 RuvA tetramers; dsDNA enters through RuvA and exits via RuvB. An RuvB hexamer assembles on each DNA strand where it exits the tetramer. Each RuvB hexamer is contacted by two RuvA subunits (via domain III) on 2 adjacent RuvB subunits; this complex drives branch migration. In the full resolvosome a probable DNA-RuvA(4)-RuvB(12)-RuvC(2) complex forms which resolves the HJ.</text>
</comment>
<comment type="subcellular location">
    <subcellularLocation>
        <location evidence="1">Cytoplasm</location>
    </subcellularLocation>
</comment>
<comment type="domain">
    <text evidence="1">Has three domains with a flexible linker between the domains II and III and assumes an 'L' shape. Domain III is highly mobile and contacts RuvB.</text>
</comment>
<comment type="similarity">
    <text evidence="1">Belongs to the RuvA family.</text>
</comment>
<reference key="1">
    <citation type="submission" date="2008-02" db="EMBL/GenBank/DDBJ databases">
        <title>Complete sequence of Synechococcus sp. PCC 7002.</title>
        <authorList>
            <person name="Li T."/>
            <person name="Zhao J."/>
            <person name="Zhao C."/>
            <person name="Liu Z."/>
            <person name="Zhao F."/>
            <person name="Marquardt J."/>
            <person name="Nomura C.T."/>
            <person name="Persson S."/>
            <person name="Detter J.C."/>
            <person name="Richardson P.M."/>
            <person name="Lanz C."/>
            <person name="Schuster S.C."/>
            <person name="Wang J."/>
            <person name="Li S."/>
            <person name="Huang X."/>
            <person name="Cai T."/>
            <person name="Yu Z."/>
            <person name="Luo J."/>
            <person name="Zhao J."/>
            <person name="Bryant D.A."/>
        </authorList>
    </citation>
    <scope>NUCLEOTIDE SEQUENCE [LARGE SCALE GENOMIC DNA]</scope>
    <source>
        <strain>ATCC 27264 / PCC 7002 / PR-6</strain>
    </source>
</reference>
<organism>
    <name type="scientific">Picosynechococcus sp. (strain ATCC 27264 / PCC 7002 / PR-6)</name>
    <name type="common">Agmenellum quadruplicatum</name>
    <dbReference type="NCBI Taxonomy" id="32049"/>
    <lineage>
        <taxon>Bacteria</taxon>
        <taxon>Bacillati</taxon>
        <taxon>Cyanobacteriota</taxon>
        <taxon>Cyanophyceae</taxon>
        <taxon>Oscillatoriophycideae</taxon>
        <taxon>Chroococcales</taxon>
        <taxon>Geminocystaceae</taxon>
        <taxon>Picosynechococcus</taxon>
    </lineage>
</organism>
<sequence>MFSYLKGEAIAIHRNLQGRFFLILEVRDIGYEIQVPGRLAQELAAAIGQPQHIFVHSQQREDGTYLYGFASAAARDLFRQLISVSGIGAQGAIALLDTLTLPELVQAIVTADHRQLAKAPGIGKKTAERLALELRSKLSQWRDQFSLPDTAAQPNAAVHEDLELTLLALGYQETEIRGAIATLSQDSILLQNDNADEWIRRAITLLSQT</sequence>
<protein>
    <recommendedName>
        <fullName evidence="1">Holliday junction branch migration complex subunit RuvA</fullName>
    </recommendedName>
</protein>
<feature type="chain" id="PRO_1000090379" description="Holliday junction branch migration complex subunit RuvA">
    <location>
        <begin position="1"/>
        <end position="209"/>
    </location>
</feature>
<feature type="region of interest" description="Domain I" evidence="1">
    <location>
        <begin position="1"/>
        <end position="70"/>
    </location>
</feature>
<feature type="region of interest" description="Domain II" evidence="1">
    <location>
        <begin position="71"/>
        <end position="149"/>
    </location>
</feature>
<feature type="region of interest" description="Flexible linker" evidence="1">
    <location>
        <begin position="149"/>
        <end position="153"/>
    </location>
</feature>
<feature type="region of interest" description="Domain III" evidence="1">
    <location>
        <begin position="154"/>
        <end position="209"/>
    </location>
</feature>
<gene>
    <name evidence="1" type="primary">ruvA</name>
    <name type="ordered locus">SYNPCC7002_A1270</name>
</gene>
<evidence type="ECO:0000255" key="1">
    <source>
        <dbReference type="HAMAP-Rule" id="MF_00031"/>
    </source>
</evidence>